<organism>
    <name type="scientific">Rhodopseudomonas palustris (strain HaA2)</name>
    <dbReference type="NCBI Taxonomy" id="316058"/>
    <lineage>
        <taxon>Bacteria</taxon>
        <taxon>Pseudomonadati</taxon>
        <taxon>Pseudomonadota</taxon>
        <taxon>Alphaproteobacteria</taxon>
        <taxon>Hyphomicrobiales</taxon>
        <taxon>Nitrobacteraceae</taxon>
        <taxon>Rhodopseudomonas</taxon>
    </lineage>
</organism>
<keyword id="KW-0963">Cytoplasm</keyword>
<keyword id="KW-0378">Hydrolase</keyword>
<keyword id="KW-1185">Reference proteome</keyword>
<keyword id="KW-0694">RNA-binding</keyword>
<keyword id="KW-0820">tRNA-binding</keyword>
<comment type="function">
    <text evidence="1">Hydrolyzes ribosome-free peptidyl-tRNAs (with 1 or more amino acids incorporated), which drop off the ribosome during protein synthesis, or as a result of ribosome stalling.</text>
</comment>
<comment type="function">
    <text evidence="1">Catalyzes the release of premature peptidyl moieties from peptidyl-tRNA molecules trapped in stalled 50S ribosomal subunits, and thus maintains levels of free tRNAs and 50S ribosomes.</text>
</comment>
<comment type="catalytic activity">
    <reaction evidence="1">
        <text>an N-acyl-L-alpha-aminoacyl-tRNA + H2O = an N-acyl-L-amino acid + a tRNA + H(+)</text>
        <dbReference type="Rhea" id="RHEA:54448"/>
        <dbReference type="Rhea" id="RHEA-COMP:10123"/>
        <dbReference type="Rhea" id="RHEA-COMP:13883"/>
        <dbReference type="ChEBI" id="CHEBI:15377"/>
        <dbReference type="ChEBI" id="CHEBI:15378"/>
        <dbReference type="ChEBI" id="CHEBI:59874"/>
        <dbReference type="ChEBI" id="CHEBI:78442"/>
        <dbReference type="ChEBI" id="CHEBI:138191"/>
        <dbReference type="EC" id="3.1.1.29"/>
    </reaction>
</comment>
<comment type="subunit">
    <text evidence="1">Monomer.</text>
</comment>
<comment type="subcellular location">
    <subcellularLocation>
        <location evidence="1">Cytoplasm</location>
    </subcellularLocation>
</comment>
<comment type="similarity">
    <text evidence="1">Belongs to the PTH family.</text>
</comment>
<protein>
    <recommendedName>
        <fullName evidence="1">Peptidyl-tRNA hydrolase</fullName>
        <shortName evidence="1">Pth</shortName>
        <ecNumber evidence="1">3.1.1.29</ecNumber>
    </recommendedName>
</protein>
<evidence type="ECO:0000255" key="1">
    <source>
        <dbReference type="HAMAP-Rule" id="MF_00083"/>
    </source>
</evidence>
<dbReference type="EC" id="3.1.1.29" evidence="1"/>
<dbReference type="EMBL" id="CP000250">
    <property type="protein sequence ID" value="ABD08852.1"/>
    <property type="molecule type" value="Genomic_DNA"/>
</dbReference>
<dbReference type="RefSeq" id="WP_011443036.1">
    <property type="nucleotide sequence ID" value="NC_007778.1"/>
</dbReference>
<dbReference type="SMR" id="Q2ISF8"/>
<dbReference type="STRING" id="316058.RPB_4160"/>
<dbReference type="KEGG" id="rpb:RPB_4160"/>
<dbReference type="eggNOG" id="COG0193">
    <property type="taxonomic scope" value="Bacteria"/>
</dbReference>
<dbReference type="HOGENOM" id="CLU_062456_1_0_5"/>
<dbReference type="OrthoDB" id="9800507at2"/>
<dbReference type="Proteomes" id="UP000008809">
    <property type="component" value="Chromosome"/>
</dbReference>
<dbReference type="GO" id="GO:0005737">
    <property type="term" value="C:cytoplasm"/>
    <property type="evidence" value="ECO:0007669"/>
    <property type="project" value="UniProtKB-SubCell"/>
</dbReference>
<dbReference type="GO" id="GO:0004045">
    <property type="term" value="F:peptidyl-tRNA hydrolase activity"/>
    <property type="evidence" value="ECO:0007669"/>
    <property type="project" value="UniProtKB-UniRule"/>
</dbReference>
<dbReference type="GO" id="GO:0000049">
    <property type="term" value="F:tRNA binding"/>
    <property type="evidence" value="ECO:0007669"/>
    <property type="project" value="UniProtKB-UniRule"/>
</dbReference>
<dbReference type="GO" id="GO:0006515">
    <property type="term" value="P:protein quality control for misfolded or incompletely synthesized proteins"/>
    <property type="evidence" value="ECO:0007669"/>
    <property type="project" value="UniProtKB-UniRule"/>
</dbReference>
<dbReference type="GO" id="GO:0072344">
    <property type="term" value="P:rescue of stalled ribosome"/>
    <property type="evidence" value="ECO:0007669"/>
    <property type="project" value="UniProtKB-UniRule"/>
</dbReference>
<dbReference type="CDD" id="cd00462">
    <property type="entry name" value="PTH"/>
    <property type="match status" value="1"/>
</dbReference>
<dbReference type="FunFam" id="3.40.50.1470:FF:000001">
    <property type="entry name" value="Peptidyl-tRNA hydrolase"/>
    <property type="match status" value="1"/>
</dbReference>
<dbReference type="Gene3D" id="3.40.50.1470">
    <property type="entry name" value="Peptidyl-tRNA hydrolase"/>
    <property type="match status" value="1"/>
</dbReference>
<dbReference type="HAMAP" id="MF_00083">
    <property type="entry name" value="Pept_tRNA_hydro_bact"/>
    <property type="match status" value="1"/>
</dbReference>
<dbReference type="InterPro" id="IPR001328">
    <property type="entry name" value="Pept_tRNA_hydro"/>
</dbReference>
<dbReference type="InterPro" id="IPR018171">
    <property type="entry name" value="Pept_tRNA_hydro_CS"/>
</dbReference>
<dbReference type="InterPro" id="IPR036416">
    <property type="entry name" value="Pept_tRNA_hydro_sf"/>
</dbReference>
<dbReference type="NCBIfam" id="TIGR00447">
    <property type="entry name" value="pth"/>
    <property type="match status" value="1"/>
</dbReference>
<dbReference type="PANTHER" id="PTHR17224">
    <property type="entry name" value="PEPTIDYL-TRNA HYDROLASE"/>
    <property type="match status" value="1"/>
</dbReference>
<dbReference type="PANTHER" id="PTHR17224:SF1">
    <property type="entry name" value="PEPTIDYL-TRNA HYDROLASE"/>
    <property type="match status" value="1"/>
</dbReference>
<dbReference type="Pfam" id="PF01195">
    <property type="entry name" value="Pept_tRNA_hydro"/>
    <property type="match status" value="1"/>
</dbReference>
<dbReference type="SUPFAM" id="SSF53178">
    <property type="entry name" value="Peptidyl-tRNA hydrolase-like"/>
    <property type="match status" value="1"/>
</dbReference>
<dbReference type="PROSITE" id="PS01195">
    <property type="entry name" value="PEPT_TRNA_HYDROL_1"/>
    <property type="match status" value="1"/>
</dbReference>
<dbReference type="PROSITE" id="PS01196">
    <property type="entry name" value="PEPT_TRNA_HYDROL_2"/>
    <property type="match status" value="1"/>
</dbReference>
<sequence>MRLFVGLGNPGTKYQDNRHNIGFMVIDEIARRHGFSPWRRRFQGETSDGALDGERITLLKPLTYMNESGRAVQEAASFYKIGQGEVAVFHDEIELPPAKVRVKVGGGIAGHNGLRSISAHIGNDYLRVRLGVGHPGVKEMVHGHVLGDFAKSERPWVAALCEIAADNAGLIAKGKDASFANKVHLAMQAKGFLDEDKKKSGDNKVAK</sequence>
<gene>
    <name evidence="1" type="primary">pth</name>
    <name type="ordered locus">RPB_4160</name>
</gene>
<feature type="chain" id="PRO_0000264094" description="Peptidyl-tRNA hydrolase">
    <location>
        <begin position="1"/>
        <end position="207"/>
    </location>
</feature>
<feature type="active site" description="Proton acceptor" evidence="1">
    <location>
        <position position="19"/>
    </location>
</feature>
<feature type="binding site" evidence="1">
    <location>
        <position position="14"/>
    </location>
    <ligand>
        <name>tRNA</name>
        <dbReference type="ChEBI" id="CHEBI:17843"/>
    </ligand>
</feature>
<feature type="binding site" evidence="1">
    <location>
        <position position="64"/>
    </location>
    <ligand>
        <name>tRNA</name>
        <dbReference type="ChEBI" id="CHEBI:17843"/>
    </ligand>
</feature>
<feature type="binding site" evidence="1">
    <location>
        <position position="66"/>
    </location>
    <ligand>
        <name>tRNA</name>
        <dbReference type="ChEBI" id="CHEBI:17843"/>
    </ligand>
</feature>
<feature type="binding site" evidence="1">
    <location>
        <position position="112"/>
    </location>
    <ligand>
        <name>tRNA</name>
        <dbReference type="ChEBI" id="CHEBI:17843"/>
    </ligand>
</feature>
<feature type="site" description="Discriminates between blocked and unblocked aminoacyl-tRNA" evidence="1">
    <location>
        <position position="9"/>
    </location>
</feature>
<feature type="site" description="Stabilizes the basic form of H active site to accept a proton" evidence="1">
    <location>
        <position position="91"/>
    </location>
</feature>
<name>PTH_RHOP2</name>
<proteinExistence type="inferred from homology"/>
<reference key="1">
    <citation type="submission" date="2006-01" db="EMBL/GenBank/DDBJ databases">
        <title>Complete sequence of Rhodopseudomonas palustris HaA2.</title>
        <authorList>
            <consortium name="US DOE Joint Genome Institute"/>
            <person name="Copeland A."/>
            <person name="Lucas S."/>
            <person name="Lapidus A."/>
            <person name="Barry K."/>
            <person name="Detter J.C."/>
            <person name="Glavina T."/>
            <person name="Hammon N."/>
            <person name="Israni S."/>
            <person name="Pitluck S."/>
            <person name="Chain P."/>
            <person name="Malfatti S."/>
            <person name="Shin M."/>
            <person name="Vergez L."/>
            <person name="Schmutz J."/>
            <person name="Larimer F."/>
            <person name="Land M."/>
            <person name="Hauser L."/>
            <person name="Pelletier D.A."/>
            <person name="Kyrpides N."/>
            <person name="Anderson I."/>
            <person name="Oda Y."/>
            <person name="Harwood C.S."/>
            <person name="Richardson P."/>
        </authorList>
    </citation>
    <scope>NUCLEOTIDE SEQUENCE [LARGE SCALE GENOMIC DNA]</scope>
    <source>
        <strain>HaA2</strain>
    </source>
</reference>
<accession>Q2ISF8</accession>